<evidence type="ECO:0000255" key="1">
    <source>
        <dbReference type="PROSITE-ProRule" id="PRU00448"/>
    </source>
</evidence>
<evidence type="ECO:0000269" key="2">
    <source>
    </source>
</evidence>
<evidence type="ECO:0000305" key="3"/>
<sequence>METPLEKALTTMVTTFHKYSGREGSKLTLSRKELKELIKTELSLAEKMKESSIDNLMKSLDKNSDQEIDFKEYSVFLTTLCMAYNDFFLEDNK</sequence>
<proteinExistence type="evidence at protein level"/>
<dbReference type="RefSeq" id="NP_001099908.1">
    <property type="nucleotide sequence ID" value="NM_001106438.1"/>
</dbReference>
<dbReference type="RefSeq" id="XP_006232663.1">
    <property type="nucleotide sequence ID" value="XM_006232601.5"/>
</dbReference>
<dbReference type="RefSeq" id="XP_017446250.1">
    <property type="nucleotide sequence ID" value="XM_017590761.1"/>
</dbReference>
<dbReference type="RefSeq" id="XP_017446251.1">
    <property type="nucleotide sequence ID" value="XM_017590762.1"/>
</dbReference>
<dbReference type="RefSeq" id="XP_017446252.1">
    <property type="nucleotide sequence ID" value="XM_017590763.1"/>
</dbReference>
<dbReference type="RefSeq" id="XP_063137668.1">
    <property type="nucleotide sequence ID" value="XM_063281598.1"/>
</dbReference>
<dbReference type="SMR" id="P63083"/>
<dbReference type="FunCoup" id="P63083">
    <property type="interactions" value="29"/>
</dbReference>
<dbReference type="STRING" id="10116.ENSRNOP00000015712"/>
<dbReference type="PhosphoSitePlus" id="P63083"/>
<dbReference type="PaxDb" id="10116-ENSRNOP00000015712"/>
<dbReference type="ABCD" id="P63083">
    <property type="antibodies" value="1 sequenced antibody"/>
</dbReference>
<dbReference type="Ensembl" id="ENSRNOT00000015712.7">
    <property type="protein sequence ID" value="ENSRNOP00000015712.4"/>
    <property type="gene ID" value="ENSRNOG00000011748.7"/>
</dbReference>
<dbReference type="GeneID" id="295211"/>
<dbReference type="KEGG" id="rno:295211"/>
<dbReference type="UCSC" id="RGD:1308996">
    <property type="organism name" value="rat"/>
</dbReference>
<dbReference type="AGR" id="RGD:1308996"/>
<dbReference type="CTD" id="6276"/>
<dbReference type="RGD" id="1308996">
    <property type="gene designation" value="S100a5"/>
</dbReference>
<dbReference type="eggNOG" id="ENOG502S40V">
    <property type="taxonomic scope" value="Eukaryota"/>
</dbReference>
<dbReference type="GeneTree" id="ENSGT00940000161986"/>
<dbReference type="HOGENOM" id="CLU_138624_2_0_1"/>
<dbReference type="InParanoid" id="P63083"/>
<dbReference type="OMA" id="CMSYNDF"/>
<dbReference type="OrthoDB" id="8881129at2759"/>
<dbReference type="PhylomeDB" id="P63083"/>
<dbReference type="TreeFam" id="TF332727"/>
<dbReference type="PRO" id="PR:P63083"/>
<dbReference type="Proteomes" id="UP000002494">
    <property type="component" value="Chromosome 2"/>
</dbReference>
<dbReference type="Bgee" id="ENSRNOG00000011748">
    <property type="expression patterns" value="Expressed in thymus and 15 other cell types or tissues"/>
</dbReference>
<dbReference type="GO" id="GO:0043025">
    <property type="term" value="C:neuronal cell body"/>
    <property type="evidence" value="ECO:0000266"/>
    <property type="project" value="RGD"/>
</dbReference>
<dbReference type="GO" id="GO:0005634">
    <property type="term" value="C:nucleus"/>
    <property type="evidence" value="ECO:0000266"/>
    <property type="project" value="RGD"/>
</dbReference>
<dbReference type="GO" id="GO:0005509">
    <property type="term" value="F:calcium ion binding"/>
    <property type="evidence" value="ECO:0000250"/>
    <property type="project" value="UniProtKB"/>
</dbReference>
<dbReference type="GO" id="GO:0048306">
    <property type="term" value="F:calcium-dependent protein binding"/>
    <property type="evidence" value="ECO:0000318"/>
    <property type="project" value="GO_Central"/>
</dbReference>
<dbReference type="GO" id="GO:0005507">
    <property type="term" value="F:copper ion binding"/>
    <property type="evidence" value="ECO:0000250"/>
    <property type="project" value="UniProtKB"/>
</dbReference>
<dbReference type="GO" id="GO:0042803">
    <property type="term" value="F:protein homodimerization activity"/>
    <property type="evidence" value="ECO:0000266"/>
    <property type="project" value="RGD"/>
</dbReference>
<dbReference type="GO" id="GO:0008270">
    <property type="term" value="F:zinc ion binding"/>
    <property type="evidence" value="ECO:0000250"/>
    <property type="project" value="UniProtKB"/>
</dbReference>
<dbReference type="CDD" id="cd00213">
    <property type="entry name" value="S-100"/>
    <property type="match status" value="1"/>
</dbReference>
<dbReference type="FunFam" id="1.10.238.10:FF:000044">
    <property type="entry name" value="Protein S100"/>
    <property type="match status" value="1"/>
</dbReference>
<dbReference type="Gene3D" id="1.10.238.10">
    <property type="entry name" value="EF-hand"/>
    <property type="match status" value="1"/>
</dbReference>
<dbReference type="InterPro" id="IPR011992">
    <property type="entry name" value="EF-hand-dom_pair"/>
</dbReference>
<dbReference type="InterPro" id="IPR018247">
    <property type="entry name" value="EF_Hand_1_Ca_BS"/>
</dbReference>
<dbReference type="InterPro" id="IPR002048">
    <property type="entry name" value="EF_hand_dom"/>
</dbReference>
<dbReference type="InterPro" id="IPR034325">
    <property type="entry name" value="S-100_dom"/>
</dbReference>
<dbReference type="InterPro" id="IPR001751">
    <property type="entry name" value="S100/CaBP7/8-like_CS"/>
</dbReference>
<dbReference type="InterPro" id="IPR013787">
    <property type="entry name" value="S100_Ca-bd_sub"/>
</dbReference>
<dbReference type="PANTHER" id="PTHR11639:SF65">
    <property type="entry name" value="PROTEIN S100-A5"/>
    <property type="match status" value="1"/>
</dbReference>
<dbReference type="PANTHER" id="PTHR11639">
    <property type="entry name" value="S100 CALCIUM-BINDING PROTEIN"/>
    <property type="match status" value="1"/>
</dbReference>
<dbReference type="Pfam" id="PF01023">
    <property type="entry name" value="S_100"/>
    <property type="match status" value="1"/>
</dbReference>
<dbReference type="SMART" id="SM00054">
    <property type="entry name" value="EFh"/>
    <property type="match status" value="1"/>
</dbReference>
<dbReference type="SMART" id="SM01394">
    <property type="entry name" value="S_100"/>
    <property type="match status" value="1"/>
</dbReference>
<dbReference type="SUPFAM" id="SSF47473">
    <property type="entry name" value="EF-hand"/>
    <property type="match status" value="1"/>
</dbReference>
<dbReference type="PROSITE" id="PS00018">
    <property type="entry name" value="EF_HAND_1"/>
    <property type="match status" value="1"/>
</dbReference>
<dbReference type="PROSITE" id="PS50222">
    <property type="entry name" value="EF_HAND_2"/>
    <property type="match status" value="1"/>
</dbReference>
<dbReference type="PROSITE" id="PS00303">
    <property type="entry name" value="S100_CABP"/>
    <property type="match status" value="1"/>
</dbReference>
<name>S10A5_RAT</name>
<keyword id="KW-0106">Calcium</keyword>
<keyword id="KW-0186">Copper</keyword>
<keyword id="KW-0903">Direct protein sequencing</keyword>
<keyword id="KW-0479">Metal-binding</keyword>
<keyword id="KW-1185">Reference proteome</keyword>
<keyword id="KW-0677">Repeat</keyword>
<keyword id="KW-0862">Zinc</keyword>
<gene>
    <name type="primary">S100a5</name>
    <name type="synonym">S100d</name>
</gene>
<accession>P63083</accession>
<accession>O88945</accession>
<accession>P82540</accession>
<organism>
    <name type="scientific">Rattus norvegicus</name>
    <name type="common">Rat</name>
    <dbReference type="NCBI Taxonomy" id="10116"/>
    <lineage>
        <taxon>Eukaryota</taxon>
        <taxon>Metazoa</taxon>
        <taxon>Chordata</taxon>
        <taxon>Craniata</taxon>
        <taxon>Vertebrata</taxon>
        <taxon>Euteleostomi</taxon>
        <taxon>Mammalia</taxon>
        <taxon>Eutheria</taxon>
        <taxon>Euarchontoglires</taxon>
        <taxon>Glires</taxon>
        <taxon>Rodentia</taxon>
        <taxon>Myomorpha</taxon>
        <taxon>Muroidea</taxon>
        <taxon>Muridae</taxon>
        <taxon>Murinae</taxon>
        <taxon>Rattus</taxon>
    </lineage>
</organism>
<comment type="function">
    <text evidence="2">Binds calcium, zinc and copper. One subunit can simultaneously bind 2 calcium ions or 2 copper ions plus 1 zinc ion. Calcium and copper ions compete for the same binding sites.</text>
</comment>
<comment type="subunit">
    <text evidence="2">Homodimer.</text>
</comment>
<comment type="mass spectrometry"/>
<comment type="similarity">
    <text evidence="3">Belongs to the S-100 family.</text>
</comment>
<feature type="chain" id="PRO_0000143982" description="Protein S100-A5">
    <location>
        <begin position="1"/>
        <end position="93"/>
    </location>
</feature>
<feature type="domain" description="EF-hand 1" evidence="3">
    <location>
        <begin position="12"/>
        <end position="47"/>
    </location>
</feature>
<feature type="domain" description="EF-hand 2" evidence="1">
    <location>
        <begin position="48"/>
        <end position="83"/>
    </location>
</feature>
<feature type="binding site" evidence="3">
    <location>
        <position position="28"/>
    </location>
    <ligand>
        <name>Ca(2+)</name>
        <dbReference type="ChEBI" id="CHEBI:29108"/>
        <label>1</label>
        <note>low affinity</note>
    </ligand>
</feature>
<feature type="binding site" evidence="3">
    <location>
        <position position="33"/>
    </location>
    <ligand>
        <name>Ca(2+)</name>
        <dbReference type="ChEBI" id="CHEBI:29108"/>
        <label>1</label>
        <note>low affinity</note>
    </ligand>
</feature>
<feature type="binding site" evidence="1">
    <location>
        <position position="61"/>
    </location>
    <ligand>
        <name>Ca(2+)</name>
        <dbReference type="ChEBI" id="CHEBI:29108"/>
        <label>2</label>
        <note>high affinity</note>
    </ligand>
</feature>
<feature type="binding site" evidence="1">
    <location>
        <position position="63"/>
    </location>
    <ligand>
        <name>Ca(2+)</name>
        <dbReference type="ChEBI" id="CHEBI:29108"/>
        <label>2</label>
        <note>high affinity</note>
    </ligand>
</feature>
<feature type="binding site" evidence="1">
    <location>
        <position position="65"/>
    </location>
    <ligand>
        <name>Ca(2+)</name>
        <dbReference type="ChEBI" id="CHEBI:29108"/>
        <label>2</label>
        <note>high affinity</note>
    </ligand>
</feature>
<feature type="binding site" evidence="1">
    <location>
        <position position="67"/>
    </location>
    <ligand>
        <name>Ca(2+)</name>
        <dbReference type="ChEBI" id="CHEBI:29108"/>
        <label>2</label>
        <note>high affinity</note>
    </ligand>
</feature>
<feature type="binding site" evidence="1">
    <location>
        <position position="72"/>
    </location>
    <ligand>
        <name>Ca(2+)</name>
        <dbReference type="ChEBI" id="CHEBI:29108"/>
        <label>2</label>
        <note>high affinity</note>
    </ligand>
</feature>
<reference key="1">
    <citation type="journal article" date="2000" name="J. Biol. Chem.">
        <title>Brain S100A5 is a novel calcium-, zinc-, and copper ion-binding protein of the EF-hand superfamily.</title>
        <authorList>
            <person name="Schaefer B.W."/>
            <person name="Fritschy J.-M."/>
            <person name="Murmann P."/>
            <person name="Troxler H."/>
            <person name="Durussel I."/>
            <person name="Heizmann C.W."/>
            <person name="Cox J.A."/>
        </authorList>
    </citation>
    <scope>PROTEIN SEQUENCE</scope>
    <scope>FUNCTION</scope>
    <scope>SUBUNIT</scope>
    <scope>MASS SPECTROMETRY</scope>
    <source>
        <strain>Sprague-Dawley</strain>
        <tissue>Brain</tissue>
    </source>
</reference>
<protein>
    <recommendedName>
        <fullName>Protein S100-A5</fullName>
    </recommendedName>
    <alternativeName>
        <fullName>Protein S-100D</fullName>
    </alternativeName>
    <alternativeName>
        <fullName>S100 calcium-binding protein A5</fullName>
    </alternativeName>
</protein>